<feature type="chain" id="PRO_0000302541" description="ATP-dependent dethiobiotin synthetase BioD">
    <location>
        <begin position="1"/>
        <end position="228"/>
    </location>
</feature>
<feature type="active site" evidence="1">
    <location>
        <position position="37"/>
    </location>
</feature>
<feature type="binding site" evidence="1">
    <location>
        <begin position="12"/>
        <end position="17"/>
    </location>
    <ligand>
        <name>ATP</name>
        <dbReference type="ChEBI" id="CHEBI:30616"/>
    </ligand>
</feature>
<feature type="binding site" evidence="1">
    <location>
        <position position="16"/>
    </location>
    <ligand>
        <name>Mg(2+)</name>
        <dbReference type="ChEBI" id="CHEBI:18420"/>
    </ligand>
</feature>
<feature type="binding site" evidence="1">
    <location>
        <position position="41"/>
    </location>
    <ligand>
        <name>substrate</name>
    </ligand>
</feature>
<feature type="binding site" evidence="1">
    <location>
        <position position="54"/>
    </location>
    <ligand>
        <name>ATP</name>
        <dbReference type="ChEBI" id="CHEBI:30616"/>
    </ligand>
</feature>
<feature type="binding site" evidence="1">
    <location>
        <position position="54"/>
    </location>
    <ligand>
        <name>Mg(2+)</name>
        <dbReference type="ChEBI" id="CHEBI:18420"/>
    </ligand>
</feature>
<feature type="binding site" evidence="1">
    <location>
        <begin position="116"/>
        <end position="119"/>
    </location>
    <ligand>
        <name>ATP</name>
        <dbReference type="ChEBI" id="CHEBI:30616"/>
    </ligand>
</feature>
<feature type="binding site" evidence="1">
    <location>
        <position position="116"/>
    </location>
    <ligand>
        <name>Mg(2+)</name>
        <dbReference type="ChEBI" id="CHEBI:18420"/>
    </ligand>
</feature>
<feature type="binding site" evidence="1">
    <location>
        <begin position="205"/>
        <end position="207"/>
    </location>
    <ligand>
        <name>ATP</name>
        <dbReference type="ChEBI" id="CHEBI:30616"/>
    </ligand>
</feature>
<dbReference type="EC" id="6.3.3.3" evidence="1"/>
<dbReference type="EMBL" id="CP000438">
    <property type="protein sequence ID" value="ABJ15466.1"/>
    <property type="molecule type" value="Genomic_DNA"/>
</dbReference>
<dbReference type="RefSeq" id="WP_003111241.1">
    <property type="nucleotide sequence ID" value="NZ_CP034244.1"/>
</dbReference>
<dbReference type="SMR" id="Q02TR2"/>
<dbReference type="KEGG" id="pau:PA14_06570"/>
<dbReference type="PseudoCAP" id="PA14_06570"/>
<dbReference type="HOGENOM" id="CLU_072551_0_0_6"/>
<dbReference type="BioCyc" id="PAER208963:G1G74-542-MONOMER"/>
<dbReference type="UniPathway" id="UPA00078">
    <property type="reaction ID" value="UER00161"/>
</dbReference>
<dbReference type="Proteomes" id="UP000000653">
    <property type="component" value="Chromosome"/>
</dbReference>
<dbReference type="GO" id="GO:0005829">
    <property type="term" value="C:cytosol"/>
    <property type="evidence" value="ECO:0007669"/>
    <property type="project" value="TreeGrafter"/>
</dbReference>
<dbReference type="GO" id="GO:0005524">
    <property type="term" value="F:ATP binding"/>
    <property type="evidence" value="ECO:0007669"/>
    <property type="project" value="UniProtKB-UniRule"/>
</dbReference>
<dbReference type="GO" id="GO:0004141">
    <property type="term" value="F:dethiobiotin synthase activity"/>
    <property type="evidence" value="ECO:0007669"/>
    <property type="project" value="UniProtKB-UniRule"/>
</dbReference>
<dbReference type="GO" id="GO:0000287">
    <property type="term" value="F:magnesium ion binding"/>
    <property type="evidence" value="ECO:0007669"/>
    <property type="project" value="UniProtKB-UniRule"/>
</dbReference>
<dbReference type="GO" id="GO:0009102">
    <property type="term" value="P:biotin biosynthetic process"/>
    <property type="evidence" value="ECO:0007669"/>
    <property type="project" value="UniProtKB-UniRule"/>
</dbReference>
<dbReference type="CDD" id="cd03109">
    <property type="entry name" value="DTBS"/>
    <property type="match status" value="1"/>
</dbReference>
<dbReference type="FunFam" id="3.40.50.300:FF:000292">
    <property type="entry name" value="ATP-dependent dethiobiotin synthetase BioD"/>
    <property type="match status" value="1"/>
</dbReference>
<dbReference type="Gene3D" id="3.40.50.300">
    <property type="entry name" value="P-loop containing nucleotide triphosphate hydrolases"/>
    <property type="match status" value="1"/>
</dbReference>
<dbReference type="HAMAP" id="MF_00336">
    <property type="entry name" value="BioD"/>
    <property type="match status" value="1"/>
</dbReference>
<dbReference type="InterPro" id="IPR004472">
    <property type="entry name" value="DTB_synth_BioD"/>
</dbReference>
<dbReference type="InterPro" id="IPR027417">
    <property type="entry name" value="P-loop_NTPase"/>
</dbReference>
<dbReference type="NCBIfam" id="TIGR00347">
    <property type="entry name" value="bioD"/>
    <property type="match status" value="1"/>
</dbReference>
<dbReference type="PANTHER" id="PTHR43210">
    <property type="entry name" value="DETHIOBIOTIN SYNTHETASE"/>
    <property type="match status" value="1"/>
</dbReference>
<dbReference type="PANTHER" id="PTHR43210:SF5">
    <property type="entry name" value="DETHIOBIOTIN SYNTHETASE"/>
    <property type="match status" value="1"/>
</dbReference>
<dbReference type="Pfam" id="PF13500">
    <property type="entry name" value="AAA_26"/>
    <property type="match status" value="1"/>
</dbReference>
<dbReference type="PIRSF" id="PIRSF006755">
    <property type="entry name" value="DTB_synth"/>
    <property type="match status" value="1"/>
</dbReference>
<dbReference type="SUPFAM" id="SSF52540">
    <property type="entry name" value="P-loop containing nucleoside triphosphate hydrolases"/>
    <property type="match status" value="1"/>
</dbReference>
<keyword id="KW-0067">ATP-binding</keyword>
<keyword id="KW-0093">Biotin biosynthesis</keyword>
<keyword id="KW-0963">Cytoplasm</keyword>
<keyword id="KW-0436">Ligase</keyword>
<keyword id="KW-0460">Magnesium</keyword>
<keyword id="KW-0479">Metal-binding</keyword>
<keyword id="KW-0547">Nucleotide-binding</keyword>
<proteinExistence type="inferred from homology"/>
<evidence type="ECO:0000255" key="1">
    <source>
        <dbReference type="HAMAP-Rule" id="MF_00336"/>
    </source>
</evidence>
<gene>
    <name evidence="1" type="primary">bioD</name>
    <name type="ordered locus">PA14_06570</name>
</gene>
<comment type="function">
    <text evidence="1">Catalyzes a mechanistically unusual reaction, the ATP-dependent insertion of CO2 between the N7 and N8 nitrogen atoms of 7,8-diaminopelargonic acid (DAPA, also called 7,8-diammoniononanoate) to form a ureido ring.</text>
</comment>
<comment type="catalytic activity">
    <reaction evidence="1">
        <text>(7R,8S)-7,8-diammoniononanoate + CO2 + ATP = (4R,5S)-dethiobiotin + ADP + phosphate + 3 H(+)</text>
        <dbReference type="Rhea" id="RHEA:15805"/>
        <dbReference type="ChEBI" id="CHEBI:15378"/>
        <dbReference type="ChEBI" id="CHEBI:16526"/>
        <dbReference type="ChEBI" id="CHEBI:30616"/>
        <dbReference type="ChEBI" id="CHEBI:43474"/>
        <dbReference type="ChEBI" id="CHEBI:149469"/>
        <dbReference type="ChEBI" id="CHEBI:149473"/>
        <dbReference type="ChEBI" id="CHEBI:456216"/>
        <dbReference type="EC" id="6.3.3.3"/>
    </reaction>
</comment>
<comment type="cofactor">
    <cofactor evidence="1">
        <name>Mg(2+)</name>
        <dbReference type="ChEBI" id="CHEBI:18420"/>
    </cofactor>
</comment>
<comment type="pathway">
    <text evidence="1">Cofactor biosynthesis; biotin biosynthesis; biotin from 7,8-diaminononanoate: step 1/2.</text>
</comment>
<comment type="subunit">
    <text evidence="1">Homodimer.</text>
</comment>
<comment type="subcellular location">
    <subcellularLocation>
        <location evidence="1">Cytoplasm</location>
    </subcellularLocation>
</comment>
<comment type="similarity">
    <text evidence="1">Belongs to the dethiobiotin synthetase family.</text>
</comment>
<sequence length="228" mass="23359">MPAFFVTGTDTEIGKTTIAAGLLHAARRAGLSTAAAKPVASGCEPTAQGLRNGDALALLGQCSLALAYEQVNPLAFAPAIAPHLAAREAGVELSAARLHEAVREVLALQADLTLVEGAGGWRVPLQGRENLSDLARLLALPVVLVVGVRLGCINHALLSAEAILGDGLALAGWVANVVDPATSRLEENLATLAERLPAPCLGRVPRLEEATPAAVAAHLDLRPLGIGL</sequence>
<protein>
    <recommendedName>
        <fullName evidence="1">ATP-dependent dethiobiotin synthetase BioD</fullName>
        <ecNumber evidence="1">6.3.3.3</ecNumber>
    </recommendedName>
    <alternativeName>
        <fullName evidence="1">DTB synthetase</fullName>
        <shortName evidence="1">DTBS</shortName>
    </alternativeName>
    <alternativeName>
        <fullName evidence="1">Dethiobiotin synthase</fullName>
    </alternativeName>
</protein>
<reference key="1">
    <citation type="journal article" date="2006" name="Genome Biol.">
        <title>Genomic analysis reveals that Pseudomonas aeruginosa virulence is combinatorial.</title>
        <authorList>
            <person name="Lee D.G."/>
            <person name="Urbach J.M."/>
            <person name="Wu G."/>
            <person name="Liberati N.T."/>
            <person name="Feinbaum R.L."/>
            <person name="Miyata S."/>
            <person name="Diggins L.T."/>
            <person name="He J."/>
            <person name="Saucier M."/>
            <person name="Deziel E."/>
            <person name="Friedman L."/>
            <person name="Li L."/>
            <person name="Grills G."/>
            <person name="Montgomery K."/>
            <person name="Kucherlapati R."/>
            <person name="Rahme L.G."/>
            <person name="Ausubel F.M."/>
        </authorList>
    </citation>
    <scope>NUCLEOTIDE SEQUENCE [LARGE SCALE GENOMIC DNA]</scope>
    <source>
        <strain>UCBPP-PA14</strain>
    </source>
</reference>
<organism>
    <name type="scientific">Pseudomonas aeruginosa (strain UCBPP-PA14)</name>
    <dbReference type="NCBI Taxonomy" id="208963"/>
    <lineage>
        <taxon>Bacteria</taxon>
        <taxon>Pseudomonadati</taxon>
        <taxon>Pseudomonadota</taxon>
        <taxon>Gammaproteobacteria</taxon>
        <taxon>Pseudomonadales</taxon>
        <taxon>Pseudomonadaceae</taxon>
        <taxon>Pseudomonas</taxon>
    </lineage>
</organism>
<name>BIOD_PSEAB</name>
<accession>Q02TR2</accession>